<evidence type="ECO:0000255" key="1">
    <source>
        <dbReference type="HAMAP-Rule" id="MF_01366"/>
    </source>
</evidence>
<evidence type="ECO:0000256" key="2">
    <source>
        <dbReference type="SAM" id="MobiDB-lite"/>
    </source>
</evidence>
<evidence type="ECO:0000305" key="3"/>
<accession>A1B6A9</accession>
<dbReference type="EMBL" id="CP000490">
    <property type="protein sequence ID" value="ABL71053.1"/>
    <property type="molecule type" value="Genomic_DNA"/>
</dbReference>
<dbReference type="RefSeq" id="WP_011749243.1">
    <property type="nucleotide sequence ID" value="NC_008687.1"/>
</dbReference>
<dbReference type="SMR" id="A1B6A9"/>
<dbReference type="STRING" id="318586.Pden_2969"/>
<dbReference type="EnsemblBacteria" id="ABL71053">
    <property type="protein sequence ID" value="ABL71053"/>
    <property type="gene ID" value="Pden_2969"/>
</dbReference>
<dbReference type="GeneID" id="93452650"/>
<dbReference type="KEGG" id="pde:Pden_2969"/>
<dbReference type="eggNOG" id="COG0102">
    <property type="taxonomic scope" value="Bacteria"/>
</dbReference>
<dbReference type="HOGENOM" id="CLU_082184_2_0_5"/>
<dbReference type="OrthoDB" id="9801330at2"/>
<dbReference type="Proteomes" id="UP000000361">
    <property type="component" value="Chromosome 2"/>
</dbReference>
<dbReference type="GO" id="GO:0022625">
    <property type="term" value="C:cytosolic large ribosomal subunit"/>
    <property type="evidence" value="ECO:0007669"/>
    <property type="project" value="TreeGrafter"/>
</dbReference>
<dbReference type="GO" id="GO:0003729">
    <property type="term" value="F:mRNA binding"/>
    <property type="evidence" value="ECO:0007669"/>
    <property type="project" value="TreeGrafter"/>
</dbReference>
<dbReference type="GO" id="GO:0003735">
    <property type="term" value="F:structural constituent of ribosome"/>
    <property type="evidence" value="ECO:0007669"/>
    <property type="project" value="InterPro"/>
</dbReference>
<dbReference type="GO" id="GO:0017148">
    <property type="term" value="P:negative regulation of translation"/>
    <property type="evidence" value="ECO:0007669"/>
    <property type="project" value="TreeGrafter"/>
</dbReference>
<dbReference type="GO" id="GO:0006412">
    <property type="term" value="P:translation"/>
    <property type="evidence" value="ECO:0007669"/>
    <property type="project" value="UniProtKB-UniRule"/>
</dbReference>
<dbReference type="CDD" id="cd00392">
    <property type="entry name" value="Ribosomal_L13"/>
    <property type="match status" value="1"/>
</dbReference>
<dbReference type="FunFam" id="3.90.1180.10:FF:000001">
    <property type="entry name" value="50S ribosomal protein L13"/>
    <property type="match status" value="1"/>
</dbReference>
<dbReference type="Gene3D" id="3.90.1180.10">
    <property type="entry name" value="Ribosomal protein L13"/>
    <property type="match status" value="1"/>
</dbReference>
<dbReference type="HAMAP" id="MF_01366">
    <property type="entry name" value="Ribosomal_uL13"/>
    <property type="match status" value="1"/>
</dbReference>
<dbReference type="InterPro" id="IPR005822">
    <property type="entry name" value="Ribosomal_uL13"/>
</dbReference>
<dbReference type="InterPro" id="IPR005823">
    <property type="entry name" value="Ribosomal_uL13_bac-type"/>
</dbReference>
<dbReference type="InterPro" id="IPR036899">
    <property type="entry name" value="Ribosomal_uL13_sf"/>
</dbReference>
<dbReference type="NCBIfam" id="TIGR01066">
    <property type="entry name" value="rplM_bact"/>
    <property type="match status" value="1"/>
</dbReference>
<dbReference type="PANTHER" id="PTHR11545:SF2">
    <property type="entry name" value="LARGE RIBOSOMAL SUBUNIT PROTEIN UL13M"/>
    <property type="match status" value="1"/>
</dbReference>
<dbReference type="PANTHER" id="PTHR11545">
    <property type="entry name" value="RIBOSOMAL PROTEIN L13"/>
    <property type="match status" value="1"/>
</dbReference>
<dbReference type="Pfam" id="PF00572">
    <property type="entry name" value="Ribosomal_L13"/>
    <property type="match status" value="1"/>
</dbReference>
<dbReference type="PIRSF" id="PIRSF002181">
    <property type="entry name" value="Ribosomal_L13"/>
    <property type="match status" value="1"/>
</dbReference>
<dbReference type="SUPFAM" id="SSF52161">
    <property type="entry name" value="Ribosomal protein L13"/>
    <property type="match status" value="1"/>
</dbReference>
<proteinExistence type="inferred from homology"/>
<organism>
    <name type="scientific">Paracoccus denitrificans (strain Pd 1222)</name>
    <dbReference type="NCBI Taxonomy" id="318586"/>
    <lineage>
        <taxon>Bacteria</taxon>
        <taxon>Pseudomonadati</taxon>
        <taxon>Pseudomonadota</taxon>
        <taxon>Alphaproteobacteria</taxon>
        <taxon>Rhodobacterales</taxon>
        <taxon>Paracoccaceae</taxon>
        <taxon>Paracoccus</taxon>
    </lineage>
</organism>
<name>RL13_PARDP</name>
<reference key="1">
    <citation type="submission" date="2006-12" db="EMBL/GenBank/DDBJ databases">
        <title>Complete sequence of chromosome 2 of Paracoccus denitrificans PD1222.</title>
        <authorList>
            <person name="Copeland A."/>
            <person name="Lucas S."/>
            <person name="Lapidus A."/>
            <person name="Barry K."/>
            <person name="Detter J.C."/>
            <person name="Glavina del Rio T."/>
            <person name="Hammon N."/>
            <person name="Israni S."/>
            <person name="Dalin E."/>
            <person name="Tice H."/>
            <person name="Pitluck S."/>
            <person name="Munk A.C."/>
            <person name="Brettin T."/>
            <person name="Bruce D."/>
            <person name="Han C."/>
            <person name="Tapia R."/>
            <person name="Gilna P."/>
            <person name="Schmutz J."/>
            <person name="Larimer F."/>
            <person name="Land M."/>
            <person name="Hauser L."/>
            <person name="Kyrpides N."/>
            <person name="Lykidis A."/>
            <person name="Spiro S."/>
            <person name="Richardson D.J."/>
            <person name="Moir J.W.B."/>
            <person name="Ferguson S.J."/>
            <person name="van Spanning R.J.M."/>
            <person name="Richardson P."/>
        </authorList>
    </citation>
    <scope>NUCLEOTIDE SEQUENCE [LARGE SCALE GENOMIC DNA]</scope>
    <source>
        <strain>Pd 1222</strain>
    </source>
</reference>
<feature type="chain" id="PRO_1000055429" description="Large ribosomal subunit protein uL13">
    <location>
        <begin position="1"/>
        <end position="154"/>
    </location>
</feature>
<feature type="region of interest" description="Disordered" evidence="2">
    <location>
        <begin position="132"/>
        <end position="154"/>
    </location>
</feature>
<gene>
    <name evidence="1" type="primary">rplM</name>
    <name type="ordered locus">Pden_2969</name>
</gene>
<keyword id="KW-1185">Reference proteome</keyword>
<keyword id="KW-0687">Ribonucleoprotein</keyword>
<keyword id="KW-0689">Ribosomal protein</keyword>
<sequence>MKTYTAKPAEIEKKWILIDAEGVVLGRLASIVAMRLRGKHKPTFTPHMDMGDNVIIINADKVQMTGDKRDAKKYYWHTGHPGGIKHRTARQVLEGAHPERVVIKAVERMISRNKLGKQQMTNLRVYAGAEHPHEAQQPEVLDVKSMNAKNTRSA</sequence>
<comment type="function">
    <text evidence="1">This protein is one of the early assembly proteins of the 50S ribosomal subunit, although it is not seen to bind rRNA by itself. It is important during the early stages of 50S assembly.</text>
</comment>
<comment type="subunit">
    <text evidence="1">Part of the 50S ribosomal subunit.</text>
</comment>
<comment type="similarity">
    <text evidence="1">Belongs to the universal ribosomal protein uL13 family.</text>
</comment>
<protein>
    <recommendedName>
        <fullName evidence="1">Large ribosomal subunit protein uL13</fullName>
    </recommendedName>
    <alternativeName>
        <fullName evidence="3">50S ribosomal protein L13</fullName>
    </alternativeName>
</protein>